<organism>
    <name type="scientific">Orientia tsutsugamushi (strain Ikeda)</name>
    <name type="common">Rickettsia tsutsugamushi</name>
    <dbReference type="NCBI Taxonomy" id="334380"/>
    <lineage>
        <taxon>Bacteria</taxon>
        <taxon>Pseudomonadati</taxon>
        <taxon>Pseudomonadota</taxon>
        <taxon>Alphaproteobacteria</taxon>
        <taxon>Rickettsiales</taxon>
        <taxon>Rickettsiaceae</taxon>
        <taxon>Rickettsieae</taxon>
        <taxon>Orientia</taxon>
    </lineage>
</organism>
<reference key="1">
    <citation type="journal article" date="2008" name="DNA Res.">
        <title>The whole-genome sequencing of the obligate intracellular bacterium Orientia tsutsugamushi revealed massive gene amplification during reductive genome evolution.</title>
        <authorList>
            <person name="Nakayama K."/>
            <person name="Yamashita A."/>
            <person name="Kurokawa K."/>
            <person name="Morimoto T."/>
            <person name="Ogawa M."/>
            <person name="Fukuhara M."/>
            <person name="Urakami H."/>
            <person name="Ohnishi M."/>
            <person name="Uchiyama I."/>
            <person name="Ogura Y."/>
            <person name="Ooka T."/>
            <person name="Oshima K."/>
            <person name="Tamura A."/>
            <person name="Hattori M."/>
            <person name="Hayashi T."/>
        </authorList>
    </citation>
    <scope>NUCLEOTIDE SEQUENCE [LARGE SCALE GENOMIC DNA]</scope>
    <source>
        <strain>Ikeda</strain>
    </source>
</reference>
<feature type="chain" id="PRO_1000123350" description="Large ribosomal subunit protein bL19">
    <location>
        <begin position="1"/>
        <end position="124"/>
    </location>
</feature>
<name>RL19_ORITI</name>
<protein>
    <recommendedName>
        <fullName evidence="1">Large ribosomal subunit protein bL19</fullName>
    </recommendedName>
    <alternativeName>
        <fullName evidence="2">50S ribosomal protein L19</fullName>
    </alternativeName>
</protein>
<gene>
    <name evidence="1" type="primary">rplS</name>
    <name type="ordered locus">OTT_0080</name>
</gene>
<keyword id="KW-0687">Ribonucleoprotein</keyword>
<keyword id="KW-0689">Ribosomal protein</keyword>
<dbReference type="EMBL" id="AP008981">
    <property type="protein sequence ID" value="BAG39538.1"/>
    <property type="molecule type" value="Genomic_DNA"/>
</dbReference>
<dbReference type="RefSeq" id="WP_012460802.1">
    <property type="nucleotide sequence ID" value="NC_010793.1"/>
</dbReference>
<dbReference type="SMR" id="B3CQN9"/>
<dbReference type="GeneID" id="89459882"/>
<dbReference type="KEGG" id="ott:OTT_0080"/>
<dbReference type="HOGENOM" id="CLU_103507_2_1_5"/>
<dbReference type="OrthoDB" id="9803541at2"/>
<dbReference type="Proteomes" id="UP000001033">
    <property type="component" value="Chromosome"/>
</dbReference>
<dbReference type="GO" id="GO:0022625">
    <property type="term" value="C:cytosolic large ribosomal subunit"/>
    <property type="evidence" value="ECO:0007669"/>
    <property type="project" value="TreeGrafter"/>
</dbReference>
<dbReference type="GO" id="GO:0003735">
    <property type="term" value="F:structural constituent of ribosome"/>
    <property type="evidence" value="ECO:0007669"/>
    <property type="project" value="InterPro"/>
</dbReference>
<dbReference type="GO" id="GO:0006412">
    <property type="term" value="P:translation"/>
    <property type="evidence" value="ECO:0007669"/>
    <property type="project" value="UniProtKB-UniRule"/>
</dbReference>
<dbReference type="FunFam" id="2.30.30.790:FF:000001">
    <property type="entry name" value="50S ribosomal protein L19"/>
    <property type="match status" value="1"/>
</dbReference>
<dbReference type="Gene3D" id="2.30.30.790">
    <property type="match status" value="1"/>
</dbReference>
<dbReference type="HAMAP" id="MF_00402">
    <property type="entry name" value="Ribosomal_bL19"/>
    <property type="match status" value="1"/>
</dbReference>
<dbReference type="InterPro" id="IPR001857">
    <property type="entry name" value="Ribosomal_bL19"/>
</dbReference>
<dbReference type="InterPro" id="IPR018257">
    <property type="entry name" value="Ribosomal_bL19_CS"/>
</dbReference>
<dbReference type="InterPro" id="IPR038657">
    <property type="entry name" value="Ribosomal_bL19_sf"/>
</dbReference>
<dbReference type="InterPro" id="IPR008991">
    <property type="entry name" value="Translation_prot_SH3-like_sf"/>
</dbReference>
<dbReference type="NCBIfam" id="TIGR01024">
    <property type="entry name" value="rplS_bact"/>
    <property type="match status" value="1"/>
</dbReference>
<dbReference type="PANTHER" id="PTHR15680:SF9">
    <property type="entry name" value="LARGE RIBOSOMAL SUBUNIT PROTEIN BL19M"/>
    <property type="match status" value="1"/>
</dbReference>
<dbReference type="PANTHER" id="PTHR15680">
    <property type="entry name" value="RIBOSOMAL PROTEIN L19"/>
    <property type="match status" value="1"/>
</dbReference>
<dbReference type="Pfam" id="PF01245">
    <property type="entry name" value="Ribosomal_L19"/>
    <property type="match status" value="1"/>
</dbReference>
<dbReference type="PIRSF" id="PIRSF002191">
    <property type="entry name" value="Ribosomal_L19"/>
    <property type="match status" value="1"/>
</dbReference>
<dbReference type="PRINTS" id="PR00061">
    <property type="entry name" value="RIBOSOMALL19"/>
</dbReference>
<dbReference type="SUPFAM" id="SSF50104">
    <property type="entry name" value="Translation proteins SH3-like domain"/>
    <property type="match status" value="1"/>
</dbReference>
<dbReference type="PROSITE" id="PS01015">
    <property type="entry name" value="RIBOSOMAL_L19"/>
    <property type="match status" value="1"/>
</dbReference>
<sequence length="124" mass="14319">MNLIKQFEQEQIKKLTQGKSIPNFRPGDTVKVNLRIIEGANERIQAYQGVVIARANRSISSSFTVRKISHGQGIERKFMLYSPLISSIELIKQGVVRRAKLYYLRNLQGRKAKIREKIFSKDNQ</sequence>
<evidence type="ECO:0000255" key="1">
    <source>
        <dbReference type="HAMAP-Rule" id="MF_00402"/>
    </source>
</evidence>
<evidence type="ECO:0000305" key="2"/>
<proteinExistence type="inferred from homology"/>
<comment type="function">
    <text evidence="1">This protein is located at the 30S-50S ribosomal subunit interface and may play a role in the structure and function of the aminoacyl-tRNA binding site.</text>
</comment>
<comment type="similarity">
    <text evidence="1">Belongs to the bacterial ribosomal protein bL19 family.</text>
</comment>
<accession>B3CQN9</accession>